<proteinExistence type="inferred from homology"/>
<keyword id="KW-0010">Activator</keyword>
<keyword id="KW-0963">Cytoplasm</keyword>
<keyword id="KW-0238">DNA-binding</keyword>
<keyword id="KW-0276">Fatty acid metabolism</keyword>
<keyword id="KW-0443">Lipid metabolism</keyword>
<keyword id="KW-1185">Reference proteome</keyword>
<keyword id="KW-0678">Repressor</keyword>
<keyword id="KW-0804">Transcription</keyword>
<keyword id="KW-0805">Transcription regulation</keyword>
<organism>
    <name type="scientific">Shewanella denitrificans (strain OS217 / ATCC BAA-1090 / DSM 15013)</name>
    <dbReference type="NCBI Taxonomy" id="318161"/>
    <lineage>
        <taxon>Bacteria</taxon>
        <taxon>Pseudomonadati</taxon>
        <taxon>Pseudomonadota</taxon>
        <taxon>Gammaproteobacteria</taxon>
        <taxon>Alteromonadales</taxon>
        <taxon>Shewanellaceae</taxon>
        <taxon>Shewanella</taxon>
    </lineage>
</organism>
<accession>Q12NQ7</accession>
<gene>
    <name evidence="1" type="primary">fadR</name>
    <name type="ordered locus">Sden_1635</name>
</gene>
<name>FADR_SHEDO</name>
<evidence type="ECO:0000255" key="1">
    <source>
        <dbReference type="HAMAP-Rule" id="MF_00696"/>
    </source>
</evidence>
<sequence>MIINAKGPASFAEKYIVRSIWDNKFPPGSILPAERELSELIGVTRTTLREVLQRLARDGWLKIQHGKPTQVNNFWETSGLNILETIADLNPEGFPVLVDQLLSARTNVSAIYFRGALRNNPDQAVDVLAGIHQLENTAEAFAEFDYQLHHRLAFSSGNPLYVLILNGFKGLYSRVGRYYFSSSDARALALNFYVELEKLALAKNYIDVPAVMRSYGINSGKMWQRLRDDMPADIAQDKS</sequence>
<dbReference type="EMBL" id="CP000302">
    <property type="protein sequence ID" value="ABE54919.1"/>
    <property type="molecule type" value="Genomic_DNA"/>
</dbReference>
<dbReference type="RefSeq" id="WP_011496077.1">
    <property type="nucleotide sequence ID" value="NC_007954.1"/>
</dbReference>
<dbReference type="SMR" id="Q12NQ7"/>
<dbReference type="STRING" id="318161.Sden_1635"/>
<dbReference type="KEGG" id="sdn:Sden_1635"/>
<dbReference type="eggNOG" id="COG2186">
    <property type="taxonomic scope" value="Bacteria"/>
</dbReference>
<dbReference type="HOGENOM" id="CLU_017584_9_4_6"/>
<dbReference type="OrthoDB" id="5683977at2"/>
<dbReference type="Proteomes" id="UP000001982">
    <property type="component" value="Chromosome"/>
</dbReference>
<dbReference type="GO" id="GO:0005737">
    <property type="term" value="C:cytoplasm"/>
    <property type="evidence" value="ECO:0007669"/>
    <property type="project" value="UniProtKB-SubCell"/>
</dbReference>
<dbReference type="GO" id="GO:0003677">
    <property type="term" value="F:DNA binding"/>
    <property type="evidence" value="ECO:0007669"/>
    <property type="project" value="UniProtKB-KW"/>
</dbReference>
<dbReference type="GO" id="GO:0003700">
    <property type="term" value="F:DNA-binding transcription factor activity"/>
    <property type="evidence" value="ECO:0007669"/>
    <property type="project" value="UniProtKB-UniRule"/>
</dbReference>
<dbReference type="GO" id="GO:0000062">
    <property type="term" value="F:fatty-acyl-CoA binding"/>
    <property type="evidence" value="ECO:0007669"/>
    <property type="project" value="InterPro"/>
</dbReference>
<dbReference type="GO" id="GO:0006631">
    <property type="term" value="P:fatty acid metabolic process"/>
    <property type="evidence" value="ECO:0007669"/>
    <property type="project" value="UniProtKB-KW"/>
</dbReference>
<dbReference type="GO" id="GO:0019217">
    <property type="term" value="P:regulation of fatty acid metabolic process"/>
    <property type="evidence" value="ECO:0007669"/>
    <property type="project" value="UniProtKB-UniRule"/>
</dbReference>
<dbReference type="CDD" id="cd07377">
    <property type="entry name" value="WHTH_GntR"/>
    <property type="match status" value="1"/>
</dbReference>
<dbReference type="Gene3D" id="1.20.120.530">
    <property type="entry name" value="GntR ligand-binding domain-like"/>
    <property type="match status" value="1"/>
</dbReference>
<dbReference type="Gene3D" id="1.10.10.10">
    <property type="entry name" value="Winged helix-like DNA-binding domain superfamily/Winged helix DNA-binding domain"/>
    <property type="match status" value="1"/>
</dbReference>
<dbReference type="HAMAP" id="MF_00696">
    <property type="entry name" value="HTH_FadR"/>
    <property type="match status" value="1"/>
</dbReference>
<dbReference type="InterPro" id="IPR014178">
    <property type="entry name" value="FA-response_TF_FadR"/>
</dbReference>
<dbReference type="InterPro" id="IPR028374">
    <property type="entry name" value="FadR_C"/>
</dbReference>
<dbReference type="InterPro" id="IPR008920">
    <property type="entry name" value="TF_FadR/GntR_C"/>
</dbReference>
<dbReference type="InterPro" id="IPR000524">
    <property type="entry name" value="Tscrpt_reg_HTH_GntR"/>
</dbReference>
<dbReference type="InterPro" id="IPR036388">
    <property type="entry name" value="WH-like_DNA-bd_sf"/>
</dbReference>
<dbReference type="InterPro" id="IPR036390">
    <property type="entry name" value="WH_DNA-bd_sf"/>
</dbReference>
<dbReference type="NCBIfam" id="TIGR02812">
    <property type="entry name" value="fadR_gamma"/>
    <property type="match status" value="1"/>
</dbReference>
<dbReference type="NCBIfam" id="NF003444">
    <property type="entry name" value="PRK04984.1"/>
    <property type="match status" value="1"/>
</dbReference>
<dbReference type="PANTHER" id="PTHR43537:SF52">
    <property type="entry name" value="FATTY ACID METABOLISM REGULATOR PROTEIN"/>
    <property type="match status" value="1"/>
</dbReference>
<dbReference type="PANTHER" id="PTHR43537">
    <property type="entry name" value="TRANSCRIPTIONAL REGULATOR, GNTR FAMILY"/>
    <property type="match status" value="1"/>
</dbReference>
<dbReference type="Pfam" id="PF07840">
    <property type="entry name" value="FadR_C"/>
    <property type="match status" value="1"/>
</dbReference>
<dbReference type="Pfam" id="PF00392">
    <property type="entry name" value="GntR"/>
    <property type="match status" value="1"/>
</dbReference>
<dbReference type="PRINTS" id="PR00035">
    <property type="entry name" value="HTHGNTR"/>
</dbReference>
<dbReference type="SMART" id="SM00345">
    <property type="entry name" value="HTH_GNTR"/>
    <property type="match status" value="1"/>
</dbReference>
<dbReference type="SUPFAM" id="SSF48008">
    <property type="entry name" value="GntR ligand-binding domain-like"/>
    <property type="match status" value="1"/>
</dbReference>
<dbReference type="SUPFAM" id="SSF46785">
    <property type="entry name" value="Winged helix' DNA-binding domain"/>
    <property type="match status" value="1"/>
</dbReference>
<dbReference type="PROSITE" id="PS50949">
    <property type="entry name" value="HTH_GNTR"/>
    <property type="match status" value="1"/>
</dbReference>
<reference key="1">
    <citation type="submission" date="2006-03" db="EMBL/GenBank/DDBJ databases">
        <title>Complete sequence of Shewanella denitrificans OS217.</title>
        <authorList>
            <consortium name="US DOE Joint Genome Institute"/>
            <person name="Copeland A."/>
            <person name="Lucas S."/>
            <person name="Lapidus A."/>
            <person name="Barry K."/>
            <person name="Detter J.C."/>
            <person name="Glavina del Rio T."/>
            <person name="Hammon N."/>
            <person name="Israni S."/>
            <person name="Dalin E."/>
            <person name="Tice H."/>
            <person name="Pitluck S."/>
            <person name="Brettin T."/>
            <person name="Bruce D."/>
            <person name="Han C."/>
            <person name="Tapia R."/>
            <person name="Gilna P."/>
            <person name="Kiss H."/>
            <person name="Schmutz J."/>
            <person name="Larimer F."/>
            <person name="Land M."/>
            <person name="Hauser L."/>
            <person name="Kyrpides N."/>
            <person name="Lykidis A."/>
            <person name="Richardson P."/>
        </authorList>
    </citation>
    <scope>NUCLEOTIDE SEQUENCE [LARGE SCALE GENOMIC DNA]</scope>
    <source>
        <strain>OS217 / ATCC BAA-1090 / DSM 15013</strain>
    </source>
</reference>
<comment type="function">
    <text evidence="1">Multifunctional regulator of fatty acid metabolism.</text>
</comment>
<comment type="subunit">
    <text evidence="1">Homodimer.</text>
</comment>
<comment type="subcellular location">
    <subcellularLocation>
        <location evidence="1">Cytoplasm</location>
    </subcellularLocation>
</comment>
<protein>
    <recommendedName>
        <fullName evidence="1">Fatty acid metabolism regulator protein</fullName>
    </recommendedName>
</protein>
<feature type="chain" id="PRO_0000301509" description="Fatty acid metabolism regulator protein">
    <location>
        <begin position="1"/>
        <end position="239"/>
    </location>
</feature>
<feature type="domain" description="HTH gntR-type" evidence="1">
    <location>
        <begin position="6"/>
        <end position="74"/>
    </location>
</feature>
<feature type="DNA-binding region" description="H-T-H motif" evidence="1">
    <location>
        <begin position="34"/>
        <end position="53"/>
    </location>
</feature>